<protein>
    <recommendedName>
        <fullName evidence="1">ATP synthase gamma chain</fullName>
    </recommendedName>
    <alternativeName>
        <fullName evidence="1">ATP synthase F1 sector gamma subunit</fullName>
    </alternativeName>
    <alternativeName>
        <fullName evidence="1">F-ATPase gamma subunit</fullName>
    </alternativeName>
</protein>
<reference key="1">
    <citation type="journal article" date="2011" name="Stand. Genomic Sci.">
        <title>Complete genome sequence of Parvibaculum lavamentivorans type strain (DS-1(T)).</title>
        <authorList>
            <person name="Schleheck D."/>
            <person name="Weiss M."/>
            <person name="Pitluck S."/>
            <person name="Bruce D."/>
            <person name="Land M.L."/>
            <person name="Han S."/>
            <person name="Saunders E."/>
            <person name="Tapia R."/>
            <person name="Detter C."/>
            <person name="Brettin T."/>
            <person name="Han J."/>
            <person name="Woyke T."/>
            <person name="Goodwin L."/>
            <person name="Pennacchio L."/>
            <person name="Nolan M."/>
            <person name="Cook A.M."/>
            <person name="Kjelleberg S."/>
            <person name="Thomas T."/>
        </authorList>
    </citation>
    <scope>NUCLEOTIDE SEQUENCE [LARGE SCALE GENOMIC DNA]</scope>
    <source>
        <strain>DS-1 / DSM 13023 / NCIMB 13966</strain>
    </source>
</reference>
<sequence length="294" mass="31832">MASLKDLRNRIASVKATQKITKAMQMVAAAKLRRAQEAAEAARPYAERMDRVLANLATGMTGRSDAPALLAGTGSDQVHLVIVATADRGLCGGFNSSIVRLARQHINKLVGEGKTVKILTVGRKGRDALKRDHASRIVKSYEFTGIRHIGFEQAEDISRTVIDLFEAGEFDVATIFYSKFVNVVSQIPTAQQLIPASVPADAGGSVDLGGAVYEYEPDEGEILKDILPRNLSVQIFRALLENVAGEFGAKMSAMDNATRNAGDMIKKLNITYNRSRQAMITKELIEIISGAEAL</sequence>
<gene>
    <name evidence="1" type="primary">atpG</name>
    <name type="ordered locus">Plav_1464</name>
</gene>
<evidence type="ECO:0000255" key="1">
    <source>
        <dbReference type="HAMAP-Rule" id="MF_00815"/>
    </source>
</evidence>
<feature type="chain" id="PRO_1000072862" description="ATP synthase gamma chain">
    <location>
        <begin position="1"/>
        <end position="294"/>
    </location>
</feature>
<dbReference type="EMBL" id="CP000774">
    <property type="protein sequence ID" value="ABS63084.1"/>
    <property type="molecule type" value="Genomic_DNA"/>
</dbReference>
<dbReference type="RefSeq" id="WP_012110365.1">
    <property type="nucleotide sequence ID" value="NC_009719.1"/>
</dbReference>
<dbReference type="SMR" id="A7HT51"/>
<dbReference type="STRING" id="402881.Plav_1464"/>
<dbReference type="KEGG" id="pla:Plav_1464"/>
<dbReference type="eggNOG" id="COG0224">
    <property type="taxonomic scope" value="Bacteria"/>
</dbReference>
<dbReference type="HOGENOM" id="CLU_050669_0_1_5"/>
<dbReference type="OrthoDB" id="9812769at2"/>
<dbReference type="Proteomes" id="UP000006377">
    <property type="component" value="Chromosome"/>
</dbReference>
<dbReference type="GO" id="GO:0005886">
    <property type="term" value="C:plasma membrane"/>
    <property type="evidence" value="ECO:0007669"/>
    <property type="project" value="UniProtKB-SubCell"/>
</dbReference>
<dbReference type="GO" id="GO:0045259">
    <property type="term" value="C:proton-transporting ATP synthase complex"/>
    <property type="evidence" value="ECO:0007669"/>
    <property type="project" value="UniProtKB-KW"/>
</dbReference>
<dbReference type="GO" id="GO:0005524">
    <property type="term" value="F:ATP binding"/>
    <property type="evidence" value="ECO:0007669"/>
    <property type="project" value="UniProtKB-UniRule"/>
</dbReference>
<dbReference type="GO" id="GO:0046933">
    <property type="term" value="F:proton-transporting ATP synthase activity, rotational mechanism"/>
    <property type="evidence" value="ECO:0007669"/>
    <property type="project" value="UniProtKB-UniRule"/>
</dbReference>
<dbReference type="GO" id="GO:0042777">
    <property type="term" value="P:proton motive force-driven plasma membrane ATP synthesis"/>
    <property type="evidence" value="ECO:0007669"/>
    <property type="project" value="UniProtKB-UniRule"/>
</dbReference>
<dbReference type="CDD" id="cd12151">
    <property type="entry name" value="F1-ATPase_gamma"/>
    <property type="match status" value="1"/>
</dbReference>
<dbReference type="FunFam" id="1.10.287.80:FF:000001">
    <property type="entry name" value="ATP synthase gamma chain"/>
    <property type="match status" value="1"/>
</dbReference>
<dbReference type="FunFam" id="1.10.287.80:FF:000003">
    <property type="entry name" value="ATP synthase gamma chain, chloroplastic"/>
    <property type="match status" value="1"/>
</dbReference>
<dbReference type="Gene3D" id="3.40.1380.10">
    <property type="match status" value="1"/>
</dbReference>
<dbReference type="Gene3D" id="1.10.287.80">
    <property type="entry name" value="ATP synthase, gamma subunit, helix hairpin domain"/>
    <property type="match status" value="1"/>
</dbReference>
<dbReference type="HAMAP" id="MF_00815">
    <property type="entry name" value="ATP_synth_gamma_bact"/>
    <property type="match status" value="1"/>
</dbReference>
<dbReference type="InterPro" id="IPR035968">
    <property type="entry name" value="ATP_synth_F1_ATPase_gsu"/>
</dbReference>
<dbReference type="InterPro" id="IPR000131">
    <property type="entry name" value="ATP_synth_F1_gsu"/>
</dbReference>
<dbReference type="InterPro" id="IPR023632">
    <property type="entry name" value="ATP_synth_F1_gsu_CS"/>
</dbReference>
<dbReference type="NCBIfam" id="TIGR01146">
    <property type="entry name" value="ATPsyn_F1gamma"/>
    <property type="match status" value="1"/>
</dbReference>
<dbReference type="NCBIfam" id="NF004146">
    <property type="entry name" value="PRK05621.1-4"/>
    <property type="match status" value="1"/>
</dbReference>
<dbReference type="PANTHER" id="PTHR11693">
    <property type="entry name" value="ATP SYNTHASE GAMMA CHAIN"/>
    <property type="match status" value="1"/>
</dbReference>
<dbReference type="PANTHER" id="PTHR11693:SF22">
    <property type="entry name" value="ATP SYNTHASE SUBUNIT GAMMA, MITOCHONDRIAL"/>
    <property type="match status" value="1"/>
</dbReference>
<dbReference type="Pfam" id="PF00231">
    <property type="entry name" value="ATP-synt"/>
    <property type="match status" value="1"/>
</dbReference>
<dbReference type="PIRSF" id="PIRSF039089">
    <property type="entry name" value="ATP_synthase_gamma"/>
    <property type="match status" value="1"/>
</dbReference>
<dbReference type="PRINTS" id="PR00126">
    <property type="entry name" value="ATPASEGAMMA"/>
</dbReference>
<dbReference type="SUPFAM" id="SSF52943">
    <property type="entry name" value="ATP synthase (F1-ATPase), gamma subunit"/>
    <property type="match status" value="1"/>
</dbReference>
<dbReference type="PROSITE" id="PS00153">
    <property type="entry name" value="ATPASE_GAMMA"/>
    <property type="match status" value="1"/>
</dbReference>
<organism>
    <name type="scientific">Parvibaculum lavamentivorans (strain DS-1 / DSM 13023 / NCIMB 13966)</name>
    <dbReference type="NCBI Taxonomy" id="402881"/>
    <lineage>
        <taxon>Bacteria</taxon>
        <taxon>Pseudomonadati</taxon>
        <taxon>Pseudomonadota</taxon>
        <taxon>Alphaproteobacteria</taxon>
        <taxon>Hyphomicrobiales</taxon>
        <taxon>Parvibaculaceae</taxon>
        <taxon>Parvibaculum</taxon>
    </lineage>
</organism>
<comment type="function">
    <text evidence="1">Produces ATP from ADP in the presence of a proton gradient across the membrane. The gamma chain is believed to be important in regulating ATPase activity and the flow of protons through the CF(0) complex.</text>
</comment>
<comment type="subunit">
    <text evidence="1">F-type ATPases have 2 components, CF(1) - the catalytic core - and CF(0) - the membrane proton channel. CF(1) has five subunits: alpha(3), beta(3), gamma(1), delta(1), epsilon(1). CF(0) has three main subunits: a, b and c.</text>
</comment>
<comment type="subcellular location">
    <subcellularLocation>
        <location evidence="1">Cell inner membrane</location>
        <topology evidence="1">Peripheral membrane protein</topology>
    </subcellularLocation>
</comment>
<comment type="similarity">
    <text evidence="1">Belongs to the ATPase gamma chain family.</text>
</comment>
<keyword id="KW-0066">ATP synthesis</keyword>
<keyword id="KW-0997">Cell inner membrane</keyword>
<keyword id="KW-1003">Cell membrane</keyword>
<keyword id="KW-0139">CF(1)</keyword>
<keyword id="KW-0375">Hydrogen ion transport</keyword>
<keyword id="KW-0406">Ion transport</keyword>
<keyword id="KW-0472">Membrane</keyword>
<keyword id="KW-1185">Reference proteome</keyword>
<keyword id="KW-0813">Transport</keyword>
<proteinExistence type="inferred from homology"/>
<accession>A7HT51</accession>
<name>ATPG_PARL1</name>